<comment type="function">
    <text evidence="4 6">Snake venom vascular endothelial growth factor (svVEGF) that may contribute to venom dispersion and prey subjugation by inducing vascular permeability and hypotension. Induces an increase in capillary permeability after intradermal injection, as well as a drastic hypotensive effect after intravenous injection (By similarity). The hypotension is mediated by nitric oxide (NO), which is produced by VEGF-activated endothelium NO synthase (By similarity). Induces angiogenesis and migration of human vascular endothelial cells in vitro (PubMed:37624240). Exhibits angiogenic activity by inducing human umbilical vein endothelial cells (HUVEC) to develop vessels in vitro (PubMed:37624240). Induces cellular migration of HUVEC cells towards a wound in scratch assays, enhancing wound closure after 12 h by 49.5% (PubMed:37624240). Induces dose-dependent leukocyte recruitment to the peritoneal cavity leading to increased vascular permeability in mice (PubMed:37624240).</text>
</comment>
<comment type="subunit">
    <text evidence="2 6">Homodimer; disulfide-linked (PubMed:37624240). Interacts with human VEGF receptor 1/FLT1 (By similarity). Interacts with human VEGF receptor 2/KDR (By similarity).</text>
</comment>
<comment type="subcellular location">
    <subcellularLocation>
        <location evidence="6">Secreted</location>
    </subcellularLocation>
</comment>
<comment type="tissue specificity">
    <text evidence="9">Expressed by venom gland.</text>
</comment>
<comment type="mass spectrometry" mass="13.3" method="MALDI" evidence="6">
    <text>Reduced form.</text>
</comment>
<comment type="mass spectrometry" mass="25.5" method="MALDI" evidence="6">
    <text>Oxidized form.</text>
</comment>
<comment type="pharmaceutical">
    <text evidence="6">Effectively recognized by Brazilian crotalid antivenom.</text>
</comment>
<comment type="similarity">
    <text evidence="8">Belongs to the PDGF/VEGF growth factor family. Snake venom VEGF subfamily.</text>
</comment>
<sequence length="114" mass="12903">QVMPFMEVYERSVCQTREMLVSILDEYPSEVAHLFRPSCVTVLRCGGCCTEESLTCTATGKRSVGREIMRVDPRQGTSKIEVMQFTEHTECECRPGSTVNNGKRKKNPKEGEPR</sequence>
<reference key="1">
    <citation type="journal article" date="2023" name="Toxins">
        <title>Beyond Angiogenesis: The Multitasking Approach of the First PEGylated Vascular Endothelial Growth Factor (CdtVEGF) from Brazilian Rattlesnake Venom.</title>
        <authorList>
            <person name="Ferreira I."/>
            <person name="Oliveira I."/>
            <person name="Bordon K."/>
            <person name="Reis M."/>
            <person name="Wiezel G."/>
            <person name="Sanchez C."/>
            <person name="Santos L."/>
            <person name="Santos-Filho N."/>
            <person name="Pucca M."/>
            <person name="Antunes L."/>
            <person name="Lopes D."/>
            <person name="Arantes E."/>
        </authorList>
    </citation>
    <scope>PROTEIN SEQUENCE OF 1-11; 33-61; 80-103 AND 107-114</scope>
    <scope>FUNCTION</scope>
    <scope>SUBUNIT</scope>
    <scope>SUBCELLULAR LOCATION</scope>
    <scope>TISSUE SPECIFICITY</scope>
    <scope>MASS SPECTROMETRY</scope>
    <scope>PHARMACEUTICAL</scope>
</reference>
<proteinExistence type="evidence at protein level"/>
<name>TXVE_CRODU</name>
<protein>
    <recommendedName>
        <fullName evidence="7">Snake venom vascular endothelial growth factor</fullName>
        <shortName evidence="7">svVEGF</shortName>
    </recommendedName>
    <alternativeName>
        <fullName evidence="1">VEGF-F</fullName>
    </alternativeName>
</protein>
<evidence type="ECO:0000250" key="1">
    <source>
        <dbReference type="UniProtKB" id="P0DL42"/>
    </source>
</evidence>
<evidence type="ECO:0000250" key="2">
    <source>
        <dbReference type="UniProtKB" id="P67862"/>
    </source>
</evidence>
<evidence type="ECO:0000250" key="3">
    <source>
        <dbReference type="UniProtKB" id="P67863"/>
    </source>
</evidence>
<evidence type="ECO:0000250" key="4">
    <source>
        <dbReference type="UniProtKB" id="P83942"/>
    </source>
</evidence>
<evidence type="ECO:0000256" key="5">
    <source>
        <dbReference type="SAM" id="MobiDB-lite"/>
    </source>
</evidence>
<evidence type="ECO:0000269" key="6">
    <source>
    </source>
</evidence>
<evidence type="ECO:0000303" key="7">
    <source>
    </source>
</evidence>
<evidence type="ECO:0000305" key="8"/>
<evidence type="ECO:0000305" key="9">
    <source>
    </source>
</evidence>
<dbReference type="SMR" id="C0HM96"/>
<dbReference type="GO" id="GO:0005615">
    <property type="term" value="C:extracellular space"/>
    <property type="evidence" value="ECO:0007669"/>
    <property type="project" value="TreeGrafter"/>
</dbReference>
<dbReference type="GO" id="GO:0016020">
    <property type="term" value="C:membrane"/>
    <property type="evidence" value="ECO:0007669"/>
    <property type="project" value="InterPro"/>
</dbReference>
<dbReference type="GO" id="GO:0042056">
    <property type="term" value="F:chemoattractant activity"/>
    <property type="evidence" value="ECO:0007669"/>
    <property type="project" value="TreeGrafter"/>
</dbReference>
<dbReference type="GO" id="GO:0008083">
    <property type="term" value="F:growth factor activity"/>
    <property type="evidence" value="ECO:0007669"/>
    <property type="project" value="UniProtKB-KW"/>
</dbReference>
<dbReference type="GO" id="GO:0090729">
    <property type="term" value="F:toxin activity"/>
    <property type="evidence" value="ECO:0007669"/>
    <property type="project" value="UniProtKB-KW"/>
</dbReference>
<dbReference type="GO" id="GO:0005172">
    <property type="term" value="F:vascular endothelial growth factor receptor binding"/>
    <property type="evidence" value="ECO:0007669"/>
    <property type="project" value="TreeGrafter"/>
</dbReference>
<dbReference type="GO" id="GO:0050930">
    <property type="term" value="P:induction of positive chemotaxis"/>
    <property type="evidence" value="ECO:0007669"/>
    <property type="project" value="TreeGrafter"/>
</dbReference>
<dbReference type="GO" id="GO:0045766">
    <property type="term" value="P:positive regulation of angiogenesis"/>
    <property type="evidence" value="ECO:0007669"/>
    <property type="project" value="TreeGrafter"/>
</dbReference>
<dbReference type="GO" id="GO:0001938">
    <property type="term" value="P:positive regulation of endothelial cell proliferation"/>
    <property type="evidence" value="ECO:0007669"/>
    <property type="project" value="TreeGrafter"/>
</dbReference>
<dbReference type="GO" id="GO:0060754">
    <property type="term" value="P:positive regulation of mast cell chemotaxis"/>
    <property type="evidence" value="ECO:0007669"/>
    <property type="project" value="TreeGrafter"/>
</dbReference>
<dbReference type="GO" id="GO:0001666">
    <property type="term" value="P:response to hypoxia"/>
    <property type="evidence" value="ECO:0007669"/>
    <property type="project" value="TreeGrafter"/>
</dbReference>
<dbReference type="GO" id="GO:0002040">
    <property type="term" value="P:sprouting angiogenesis"/>
    <property type="evidence" value="ECO:0007669"/>
    <property type="project" value="TreeGrafter"/>
</dbReference>
<dbReference type="GO" id="GO:0048010">
    <property type="term" value="P:vascular endothelial growth factor receptor signaling pathway"/>
    <property type="evidence" value="ECO:0007669"/>
    <property type="project" value="TreeGrafter"/>
</dbReference>
<dbReference type="GO" id="GO:0038084">
    <property type="term" value="P:vascular endothelial growth factor signaling pathway"/>
    <property type="evidence" value="ECO:0007669"/>
    <property type="project" value="TreeGrafter"/>
</dbReference>
<dbReference type="CDD" id="cd00135">
    <property type="entry name" value="PDGF"/>
    <property type="match status" value="1"/>
</dbReference>
<dbReference type="FunFam" id="2.10.90.10:FF:000030">
    <property type="entry name" value="Vascular endothelial growth factor B"/>
    <property type="match status" value="1"/>
</dbReference>
<dbReference type="Gene3D" id="2.10.90.10">
    <property type="entry name" value="Cystine-knot cytokines"/>
    <property type="match status" value="1"/>
</dbReference>
<dbReference type="InterPro" id="IPR029034">
    <property type="entry name" value="Cystine-knot_cytokine"/>
</dbReference>
<dbReference type="InterPro" id="IPR023581">
    <property type="entry name" value="PD_growth_factor_CS"/>
</dbReference>
<dbReference type="InterPro" id="IPR000072">
    <property type="entry name" value="PDGF/VEGF_dom"/>
</dbReference>
<dbReference type="InterPro" id="IPR050507">
    <property type="entry name" value="PDGF/VEGF_growth_factor"/>
</dbReference>
<dbReference type="PANTHER" id="PTHR12025">
    <property type="entry name" value="VASCULAR ENDOTHELIAL GROWTH FACTOR"/>
    <property type="match status" value="1"/>
</dbReference>
<dbReference type="PANTHER" id="PTHR12025:SF5">
    <property type="entry name" value="VASCULAR ENDOTHELIAL GROWTH FACTOR A, LONG FORM"/>
    <property type="match status" value="1"/>
</dbReference>
<dbReference type="Pfam" id="PF00341">
    <property type="entry name" value="PDGF"/>
    <property type="match status" value="1"/>
</dbReference>
<dbReference type="SMART" id="SM00141">
    <property type="entry name" value="PDGF"/>
    <property type="match status" value="1"/>
</dbReference>
<dbReference type="SUPFAM" id="SSF57501">
    <property type="entry name" value="Cystine-knot cytokines"/>
    <property type="match status" value="1"/>
</dbReference>
<accession>C0HM96</accession>
<keyword id="KW-0903">Direct protein sequencing</keyword>
<keyword id="KW-1015">Disulfide bond</keyword>
<keyword id="KW-0339">Growth factor</keyword>
<keyword id="KW-0582">Pharmaceutical</keyword>
<keyword id="KW-0873">Pyrrolidone carboxylic acid</keyword>
<keyword id="KW-0964">Secreted</keyword>
<keyword id="KW-0800">Toxin</keyword>
<organism>
    <name type="scientific">Crotalus durissus terrificus</name>
    <name type="common">South American rattlesnake</name>
    <dbReference type="NCBI Taxonomy" id="8732"/>
    <lineage>
        <taxon>Eukaryota</taxon>
        <taxon>Metazoa</taxon>
        <taxon>Chordata</taxon>
        <taxon>Craniata</taxon>
        <taxon>Vertebrata</taxon>
        <taxon>Euteleostomi</taxon>
        <taxon>Lepidosauria</taxon>
        <taxon>Squamata</taxon>
        <taxon>Bifurcata</taxon>
        <taxon>Unidentata</taxon>
        <taxon>Episquamata</taxon>
        <taxon>Toxicofera</taxon>
        <taxon>Serpentes</taxon>
        <taxon>Colubroidea</taxon>
        <taxon>Viperidae</taxon>
        <taxon>Crotalinae</taxon>
        <taxon>Crotalus</taxon>
    </lineage>
</organism>
<feature type="chain" id="PRO_0000459539" description="Snake venom vascular endothelial growth factor">
    <location>
        <begin position="1" status="less than"/>
        <end position="114"/>
    </location>
</feature>
<feature type="region of interest" description="Disordered" evidence="5">
    <location>
        <begin position="92"/>
        <end position="114"/>
    </location>
</feature>
<feature type="modified residue" description="Pyrrolidone carboxylic acid" evidence="4">
    <location>
        <position position="1"/>
    </location>
</feature>
<feature type="disulfide bond" evidence="3">
    <location>
        <begin position="14"/>
        <end position="56"/>
    </location>
</feature>
<feature type="disulfide bond" description="Interchain (with C-72)" evidence="3">
    <location>
        <position position="39"/>
    </location>
</feature>
<feature type="disulfide bond" evidence="3">
    <location>
        <begin position="45"/>
        <end position="91"/>
    </location>
</feature>
<feature type="disulfide bond" description="Interchain (with C-63)" evidence="3">
    <location>
        <position position="48"/>
    </location>
</feature>
<feature type="disulfide bond" evidence="3">
    <location>
        <begin position="49"/>
        <end position="93"/>
    </location>
</feature>
<feature type="non-terminal residue" evidence="7">
    <location>
        <position position="1"/>
    </location>
</feature>